<comment type="function">
    <text evidence="2 3">Essential cofactor of the RNA polymerase L that plays a central role in the transcription and replication by forming the polymerase complex with RNA polymerase L and recruiting L to the genomic N-RNA template for RNA synthesis (By similarity). Also plays a central role in the encapsidation of nascent RNA chains by forming the encapsidation complex with the nucleocapsid protein N (N-P complex). Acts as a chaperone for newly synthesized free N protein, so-called N0, allowing encapsidation of nascent RNA chains during replication (By similarity). The nucleoprotein protein N prevents excessive phosphorylation of P, which leads to down-regulation of viral transcription/ replication. Participates, together with N, in the formation of viral factories (viroplasms), which are large inclusions in the host cytoplasm where replication takes place (By similarity).</text>
</comment>
<comment type="subunit">
    <text evidence="2 3">Homotetramer. Interacts (via multimerization domain) with polymerase L; this interaction forms the polymerase L-P complex (By similarity). Interacts (via N-terminus) with N0 (via Ncore); this interaction allows P to chaperon N0 to avoid N polymerization before encapsidation. Interacts (via C-terminus) with N-RNA template; this interaction positions the polymerase on the template for both transcription and replication (By similarity).</text>
</comment>
<comment type="domain">
    <text evidence="1 2 3">The N-terminus consists of a long intrinsically disordered tail. The central part contains the coiled-coil multimerization domain (PMD) (By similarity). Forms a four-stranded coiled coil structure (By similarity). The C-terminus constitutes the alpha-helical domain that binds to the nucleocapsid (N-RNA complex) (By similarity).</text>
</comment>
<comment type="RNA editing">
    <location>
        <position position="164" evidence="5"/>
    </location>
    <text>Partially edited. RNA editing at this position consists of an insertion of two guanine nucleotides. The sequence displayed here is the P protein, derived from the edited RNA. The unedited RNA version gives rise to the V protein (AC P36315).</text>
</comment>
<comment type="similarity">
    <text evidence="6">Belongs to the rubulavirus/avulavirus P protein family.</text>
</comment>
<organism>
    <name type="scientific">Simian virus 41</name>
    <name type="common">SV41</name>
    <dbReference type="NCBI Taxonomy" id="3052561"/>
    <lineage>
        <taxon>Viruses</taxon>
        <taxon>Riboviria</taxon>
        <taxon>Orthornavirae</taxon>
        <taxon>Negarnaviricota</taxon>
        <taxon>Haploviricotina</taxon>
        <taxon>Monjiviricetes</taxon>
        <taxon>Mononegavirales</taxon>
        <taxon>Paramyxoviridae</taxon>
        <taxon>Rubulavirinae</taxon>
        <taxon>Orthorubulavirus</taxon>
    </lineage>
</organism>
<keyword id="KW-0597">Phosphoprotein</keyword>
<keyword id="KW-0691">RNA editing</keyword>
<keyword id="KW-0693">Viral RNA replication</keyword>
<name>PHOSP_SV41</name>
<feature type="chain" id="PRO_0000142717" description="Phosphoprotein">
    <location>
        <begin position="1"/>
        <end position="395"/>
    </location>
</feature>
<feature type="region of interest" description="Disordered" evidence="4">
    <location>
        <begin position="143"/>
        <end position="183"/>
    </location>
</feature>
<feature type="region of interest" description="Multimerization" evidence="3">
    <location>
        <begin position="220"/>
        <end position="283"/>
    </location>
</feature>
<feature type="compositionally biased region" description="Polar residues" evidence="4">
    <location>
        <begin position="143"/>
        <end position="157"/>
    </location>
</feature>
<feature type="compositionally biased region" description="Basic and acidic residues" evidence="4">
    <location>
        <begin position="158"/>
        <end position="172"/>
    </location>
</feature>
<dbReference type="EMBL" id="S60813">
    <property type="protein sequence ID" value="AAB26640.2"/>
    <property type="molecule type" value="mRNA"/>
</dbReference>
<dbReference type="PIR" id="JQ2041">
    <property type="entry name" value="JQ2041"/>
</dbReference>
<dbReference type="SMR" id="Q86606"/>
<dbReference type="KEGG" id="vg:3159466"/>
<dbReference type="OrthoDB" id="9580at10239"/>
<dbReference type="Gene3D" id="1.20.5.300">
    <property type="match status" value="1"/>
</dbReference>
<dbReference type="Gene3D" id="1.10.8.10">
    <property type="entry name" value="DNA helicase RuvA subunit, C-terminal domain"/>
    <property type="match status" value="1"/>
</dbReference>
<dbReference type="InterPro" id="IPR004897">
    <property type="entry name" value="P/V_Pprotein_paramyxoviral"/>
</dbReference>
<dbReference type="InterPro" id="IPR025909">
    <property type="entry name" value="Soyouz_module"/>
</dbReference>
<dbReference type="Pfam" id="PF03210">
    <property type="entry name" value="Paramyx_P_V_C"/>
    <property type="match status" value="1"/>
</dbReference>
<dbReference type="Pfam" id="PF14313">
    <property type="entry name" value="Soyouz_module"/>
    <property type="match status" value="1"/>
</dbReference>
<sequence length="395" mass="41921">MAEEPTYTAEQVNDVVHAGLGTVDFFLSRPVDGQSSLGKGSVPPGITAVLTNAAELKAKTAAAAPVKPKRKKIQHMTPAYTIADNGDPNRLPANTPIANPLIPIERPPGRMTDLDLATGTVTQGTYKGVELAKAGKNALLTRFSSGPSLTDQASSKDPNFKRGGEKLTDATKADIGGSGASPGSETKLRFMSGAIQHVPQLLPLTASSPVLVEPAPIGAENVKEIIEILRGLDLRMQSLEGKVDKILATSATITALKNEVTSLKANVATVEGMMTTMKIMDPSTPTNVPVEKIRKNLKDTPVIISGPLSESHITEGSDMIVLDELARPSLSSTKKIVRRPEPKKDLTGMKLMLIQLANDCMGKPDQKAEIVAKIHAATREAQLLDIKRSIIKSAI</sequence>
<accession>Q86606</accession>
<organismHost>
    <name type="scientific">Simiiformes</name>
    <dbReference type="NCBI Taxonomy" id="314293"/>
</organismHost>
<reference key="1">
    <citation type="journal article" date="1993" name="J. Gen. Virol.">
        <title>Sequence determination of the P gene of simian virus 41: presence of irregular deletions near the RNA-editing sites of paramyxoviruses.</title>
        <authorList>
            <person name="Kawano M."/>
            <person name="Tsurudome M."/>
            <person name="Oki N."/>
            <person name="Nishio M."/>
            <person name="Komada H."/>
            <person name="Matsumura H."/>
            <person name="Kusagawa S."/>
            <person name="Ohta H."/>
            <person name="Ito Y."/>
        </authorList>
    </citation>
    <scope>NUCLEOTIDE SEQUENCE [MRNA]</scope>
    <scope>RNA EDITING</scope>
    <source>
        <strain>Toshiba/Chanock</strain>
    </source>
</reference>
<gene>
    <name type="primary">P/V</name>
</gene>
<evidence type="ECO:0000250" key="1">
    <source>
        <dbReference type="UniProtKB" id="P04859"/>
    </source>
</evidence>
<evidence type="ECO:0000250" key="2">
    <source>
        <dbReference type="UniProtKB" id="P06162"/>
    </source>
</evidence>
<evidence type="ECO:0000250" key="3">
    <source>
        <dbReference type="UniProtKB" id="Q77M42"/>
    </source>
</evidence>
<evidence type="ECO:0000256" key="4">
    <source>
        <dbReference type="SAM" id="MobiDB-lite"/>
    </source>
</evidence>
<evidence type="ECO:0000269" key="5">
    <source>
    </source>
</evidence>
<evidence type="ECO:0000305" key="6"/>
<proteinExistence type="evidence at transcript level"/>
<protein>
    <recommendedName>
        <fullName>Phosphoprotein</fullName>
        <shortName>Protein P</shortName>
    </recommendedName>
</protein>